<sequence>MASSAREHLLFVRRRNPQMRYTLSPENLQSLAAQSSMPENMTLQRANSDTDLVTSESRSSLTASMYEYTLGQAQNLIIFWDIKEEVDPSDWIGLYHIDENSPANFWDSKNRGVTGTQKGQIVWRIEPGPYFMEPEIKICFKYYHGISGALRATTPCITVKNPAVMMGAEGMEGGASGNLHSRKLVSFTLSDLRAVGLKKGMFFNPDPYLKMSIQPGKKSSFPTCAHHGQERRSTIISNTTNPIWHREKYSFFALLTDVLEIEIKDKFAKSRPIIKRFLGKLTIPVQRLLERQAIGDQMLSYNLGRRLPADHVSGYLQFKVEVTSSVHEDASPEAVGTILGVNSVNGDLGSPSDDEDMPGSHHDSQVCSNGPVSEDSAADGTPKHSFRTSSTLEIDTEELTSTSSRTSPPRGRQDSLNDYLDAIEHNGHSRPGTATCSERSMGASPKLRSSFPTDTRLNAMLHIDSDEEDHEFQQDLGYPSSLEEEGGLIMFSRASRADDGSLTSQTKLEDNPVENEEASTHEAASFEDKPENLPELAESSLPAGPAPEEGEGGPEPQPSADQGSAELCGSQEVDQPTSGADTGTSDASGGSRRAVSETESLDQGSEPSQVSSETEPSDPARTESVSEASTRPEGESDLECADSSCNESVTTQLSSVDTRCSSLESARFPETPAFSSQEEEDGACAAEPTSSGPAEGSQESVCTAGSLPVVQVPSGEDEGPGAESATVPDQEELGEVWQRRGSLEGAAAAAESPPQEEGSAGEAQGTCEGATAQEEGATGGSQANGHQPLRSLPSVRQDVSRYQRVDEALPPNWEARIDSHGRIFYVDHVNRTTTWQRPTAPPAPQVLQRSNSIQQMEQLNRRYQSIRRTMTNERPEENTNAIDGAGEEADFHQASADFRRENILPHSTSRSRITLLLQSPPVKFLISPEFFTVLHSNPSAYRMFTNNTCLKHMITKVRRDTHHFERYQHNRDLVGFLNMFANKQLELPRGWEMKHDHQGKAFFVDHNSRTTTFIDPRLPLQSSRPTSALVHRQHLTRQRSHSAGEVGEDSRHAGPPVLPRPSSTFNTVSRPQYQDMVPVAYNDKIVAFLRQPNIFEILQERQPDLTRNHSLREKIQFIRTEGTPGLVRLSSDADLVMLLSLFEEEIMSYVPPHALLHPSYCQSPRGSPVSSPQNSPGTQRANARAPAPYKRDFEAKLRNFYRKLETKGYGQGPGKLKLIIRRDHLLEDAFNQIMGYSRKDLQRNKLYVTFVGEEGLDYSGPSREFFFLVSRELFNPYYGLFEYSANDTYTVQISPMSAFVDNHHEWFRFSGRILGLALIHQYLLDAFFTRPFYKALLRILCDLSDLEYLDEEFHQSLQWMKDNDIHDILDLTFTVNEEVFGQITERELKPGGANIPVTEKNKKEYIERMVKWRIERGVVQQTESLVRGFYEVVDARLVSVFDARELELVIAGTAEIDLSDWRNNTEYRGGYHDNHIVIRWFWAAVERFNNEQRLRLLQFVTGTSSIPYEGFASLRGSNGPRRFCVEKWGKITALPRAHTCFNRLDLPPYPSFSMLYEKLLTAVEETSTFGLE</sequence>
<protein>
    <recommendedName>
        <fullName>E3 ubiquitin-protein ligase HECW2</fullName>
        <ecNumber>2.3.2.26</ecNumber>
    </recommendedName>
    <alternativeName>
        <fullName>HECT, C2 and WW domain-containing protein 2</fullName>
    </alternativeName>
    <alternativeName>
        <fullName>HECT-type E3 ubiquitin transferase HECW2</fullName>
    </alternativeName>
    <alternativeName>
        <fullName>NEDD4-like E3 ubiquitin-protein ligase 2</fullName>
    </alternativeName>
</protein>
<proteinExistence type="evidence at protein level"/>
<gene>
    <name type="primary">HECW2</name>
    <name type="synonym">KIAA1301</name>
    <name type="synonym">NEDL2</name>
</gene>
<dbReference type="EC" id="2.3.2.26"/>
<dbReference type="EMBL" id="AB037722">
    <property type="protein sequence ID" value="BAA92539.1"/>
    <property type="status" value="ALT_INIT"/>
    <property type="molecule type" value="mRNA"/>
</dbReference>
<dbReference type="EMBL" id="AL390186">
    <property type="protein sequence ID" value="CAB99103.1"/>
    <property type="molecule type" value="mRNA"/>
</dbReference>
<dbReference type="EMBL" id="CR749424">
    <property type="protein sequence ID" value="CAH18262.1"/>
    <property type="status" value="ALT_SEQ"/>
    <property type="molecule type" value="mRNA"/>
</dbReference>
<dbReference type="EMBL" id="AC020571">
    <property type="status" value="NOT_ANNOTATED_CDS"/>
    <property type="molecule type" value="Genomic_DNA"/>
</dbReference>
<dbReference type="EMBL" id="AC068544">
    <property type="status" value="NOT_ANNOTATED_CDS"/>
    <property type="molecule type" value="Genomic_DNA"/>
</dbReference>
<dbReference type="EMBL" id="AC073905">
    <property type="status" value="NOT_ANNOTATED_CDS"/>
    <property type="molecule type" value="Genomic_DNA"/>
</dbReference>
<dbReference type="EMBL" id="AC074090">
    <property type="status" value="NOT_ANNOTATED_CDS"/>
    <property type="molecule type" value="Genomic_DNA"/>
</dbReference>
<dbReference type="EMBL" id="AC093379">
    <property type="status" value="NOT_ANNOTATED_CDS"/>
    <property type="molecule type" value="Genomic_DNA"/>
</dbReference>
<dbReference type="EMBL" id="BC117194">
    <property type="protein sequence ID" value="AAI17195.1"/>
    <property type="molecule type" value="mRNA"/>
</dbReference>
<dbReference type="EMBL" id="BC117198">
    <property type="protein sequence ID" value="AAI17199.1"/>
    <property type="molecule type" value="mRNA"/>
</dbReference>
<dbReference type="CCDS" id="CCDS33354.1">
    <molecule id="Q9P2P5-1"/>
</dbReference>
<dbReference type="PIR" id="T51886">
    <property type="entry name" value="T51886"/>
</dbReference>
<dbReference type="RefSeq" id="NP_001335697.1">
    <molecule id="Q9P2P5-1"/>
    <property type="nucleotide sequence ID" value="NM_001348768.2"/>
</dbReference>
<dbReference type="RefSeq" id="NP_065811.1">
    <molecule id="Q9P2P5-1"/>
    <property type="nucleotide sequence ID" value="NM_020760.4"/>
</dbReference>
<dbReference type="RefSeq" id="XP_016860052.1">
    <property type="nucleotide sequence ID" value="XM_017004563.1"/>
</dbReference>
<dbReference type="RefSeq" id="XP_047301152.1">
    <molecule id="Q9P2P5-1"/>
    <property type="nucleotide sequence ID" value="XM_047445196.1"/>
</dbReference>
<dbReference type="RefSeq" id="XP_047301153.1">
    <molecule id="Q9P2P5-1"/>
    <property type="nucleotide sequence ID" value="XM_047445197.1"/>
</dbReference>
<dbReference type="RefSeq" id="XP_047301154.1">
    <molecule id="Q9P2P5-1"/>
    <property type="nucleotide sequence ID" value="XM_047445198.1"/>
</dbReference>
<dbReference type="RefSeq" id="XP_054199157.1">
    <molecule id="Q9P2P5-1"/>
    <property type="nucleotide sequence ID" value="XM_054343182.1"/>
</dbReference>
<dbReference type="RefSeq" id="XP_054199158.1">
    <molecule id="Q9P2P5-1"/>
    <property type="nucleotide sequence ID" value="XM_054343183.1"/>
</dbReference>
<dbReference type="RefSeq" id="XP_054199159.1">
    <molecule id="Q9P2P5-1"/>
    <property type="nucleotide sequence ID" value="XM_054343184.1"/>
</dbReference>
<dbReference type="PDB" id="2LFE">
    <property type="method" value="NMR"/>
    <property type="chains" value="A=43-162"/>
</dbReference>
<dbReference type="PDBsum" id="2LFE"/>
<dbReference type="SMR" id="Q9P2P5"/>
<dbReference type="BioGRID" id="121581">
    <property type="interactions" value="324"/>
</dbReference>
<dbReference type="FunCoup" id="Q9P2P5">
    <property type="interactions" value="451"/>
</dbReference>
<dbReference type="IntAct" id="Q9P2P5">
    <property type="interactions" value="23"/>
</dbReference>
<dbReference type="MINT" id="Q9P2P5"/>
<dbReference type="STRING" id="9606.ENSP00000260983"/>
<dbReference type="GlyGen" id="Q9P2P5">
    <property type="glycosylation" value="1 site, 1 O-linked glycan (1 site)"/>
</dbReference>
<dbReference type="iPTMnet" id="Q9P2P5"/>
<dbReference type="PhosphoSitePlus" id="Q9P2P5"/>
<dbReference type="BioMuta" id="HECW2"/>
<dbReference type="DMDM" id="126215718"/>
<dbReference type="jPOST" id="Q9P2P5"/>
<dbReference type="MassIVE" id="Q9P2P5"/>
<dbReference type="PaxDb" id="9606-ENSP00000260983"/>
<dbReference type="PeptideAtlas" id="Q9P2P5"/>
<dbReference type="ProteomicsDB" id="83874">
    <molecule id="Q9P2P5-1"/>
</dbReference>
<dbReference type="ProteomicsDB" id="83875">
    <molecule id="Q9P2P5-2"/>
</dbReference>
<dbReference type="Pumba" id="Q9P2P5"/>
<dbReference type="Antibodypedia" id="34059">
    <property type="antibodies" value="179 antibodies from 26 providers"/>
</dbReference>
<dbReference type="DNASU" id="57520"/>
<dbReference type="Ensembl" id="ENST00000260983.8">
    <molecule id="Q9P2P5-1"/>
    <property type="protein sequence ID" value="ENSP00000260983.2"/>
    <property type="gene ID" value="ENSG00000138411.13"/>
</dbReference>
<dbReference type="Ensembl" id="ENST00000644256.1">
    <molecule id="Q9P2P5-1"/>
    <property type="protein sequence ID" value="ENSP00000494649.1"/>
    <property type="gene ID" value="ENSG00000138411.13"/>
</dbReference>
<dbReference type="Ensembl" id="ENST00000644978.2">
    <molecule id="Q9P2P5-1"/>
    <property type="protein sequence ID" value="ENSP00000495418.1"/>
    <property type="gene ID" value="ENSG00000138411.13"/>
</dbReference>
<dbReference type="Ensembl" id="ENST00000647236.1">
    <molecule id="Q9P2P5-2"/>
    <property type="protein sequence ID" value="ENSP00000494800.1"/>
    <property type="gene ID" value="ENSG00000138411.13"/>
</dbReference>
<dbReference type="GeneID" id="57520"/>
<dbReference type="KEGG" id="hsa:57520"/>
<dbReference type="MANE-Select" id="ENST00000644978.2">
    <property type="protein sequence ID" value="ENSP00000495418.1"/>
    <property type="RefSeq nucleotide sequence ID" value="NM_001348768.2"/>
    <property type="RefSeq protein sequence ID" value="NP_001335697.1"/>
</dbReference>
<dbReference type="UCSC" id="uc002utl.2">
    <molecule id="Q9P2P5-1"/>
    <property type="organism name" value="human"/>
</dbReference>
<dbReference type="AGR" id="HGNC:29853"/>
<dbReference type="CTD" id="57520"/>
<dbReference type="DisGeNET" id="57520"/>
<dbReference type="GeneCards" id="HECW2"/>
<dbReference type="HGNC" id="HGNC:29853">
    <property type="gene designation" value="HECW2"/>
</dbReference>
<dbReference type="HPA" id="ENSG00000138411">
    <property type="expression patterns" value="Low tissue specificity"/>
</dbReference>
<dbReference type="MalaCards" id="HECW2"/>
<dbReference type="MIM" id="617245">
    <property type="type" value="gene"/>
</dbReference>
<dbReference type="MIM" id="617268">
    <property type="type" value="phenotype"/>
</dbReference>
<dbReference type="neXtProt" id="NX_Q9P2P5"/>
<dbReference type="OpenTargets" id="ENSG00000138411"/>
<dbReference type="PharmGKB" id="PA134925001"/>
<dbReference type="VEuPathDB" id="HostDB:ENSG00000138411"/>
<dbReference type="eggNOG" id="KOG0940">
    <property type="taxonomic scope" value="Eukaryota"/>
</dbReference>
<dbReference type="GeneTree" id="ENSGT00940000155466"/>
<dbReference type="HOGENOM" id="CLU_002173_14_0_1"/>
<dbReference type="InParanoid" id="Q9P2P5"/>
<dbReference type="OMA" id="TAGQHRE"/>
<dbReference type="OrthoDB" id="5987976at2759"/>
<dbReference type="PAN-GO" id="Q9P2P5">
    <property type="GO annotations" value="6 GO annotations based on evolutionary models"/>
</dbReference>
<dbReference type="PhylomeDB" id="Q9P2P5"/>
<dbReference type="TreeFam" id="TF313938"/>
<dbReference type="PathwayCommons" id="Q9P2P5"/>
<dbReference type="Reactome" id="R-HSA-983168">
    <property type="pathway name" value="Antigen processing: Ubiquitination &amp; Proteasome degradation"/>
</dbReference>
<dbReference type="SignaLink" id="Q9P2P5"/>
<dbReference type="SIGNOR" id="Q9P2P5"/>
<dbReference type="UniPathway" id="UPA00143"/>
<dbReference type="BioGRID-ORCS" id="57520">
    <property type="hits" value="16 hits in 1191 CRISPR screens"/>
</dbReference>
<dbReference type="CD-CODE" id="FB4E32DD">
    <property type="entry name" value="Presynaptic clusters and postsynaptic densities"/>
</dbReference>
<dbReference type="ChiTaRS" id="HECW2">
    <property type="organism name" value="human"/>
</dbReference>
<dbReference type="EvolutionaryTrace" id="Q9P2P5"/>
<dbReference type="GenomeRNAi" id="57520"/>
<dbReference type="Pharos" id="Q9P2P5">
    <property type="development level" value="Tbio"/>
</dbReference>
<dbReference type="PRO" id="PR:Q9P2P5"/>
<dbReference type="Proteomes" id="UP000005640">
    <property type="component" value="Chromosome 2"/>
</dbReference>
<dbReference type="RNAct" id="Q9P2P5">
    <property type="molecule type" value="protein"/>
</dbReference>
<dbReference type="Bgee" id="ENSG00000138411">
    <property type="expression patterns" value="Expressed in left ventricle myocardium and 166 other cell types or tissues"/>
</dbReference>
<dbReference type="ExpressionAtlas" id="Q9P2P5">
    <property type="expression patterns" value="baseline and differential"/>
</dbReference>
<dbReference type="GO" id="GO:0005737">
    <property type="term" value="C:cytoplasm"/>
    <property type="evidence" value="ECO:0000318"/>
    <property type="project" value="GO_Central"/>
</dbReference>
<dbReference type="GO" id="GO:0072686">
    <property type="term" value="C:mitotic spindle"/>
    <property type="evidence" value="ECO:0000314"/>
    <property type="project" value="UniProtKB"/>
</dbReference>
<dbReference type="GO" id="GO:0061630">
    <property type="term" value="F:ubiquitin protein ligase activity"/>
    <property type="evidence" value="ECO:0000318"/>
    <property type="project" value="GO_Central"/>
</dbReference>
<dbReference type="GO" id="GO:0016567">
    <property type="term" value="P:protein ubiquitination"/>
    <property type="evidence" value="ECO:0007669"/>
    <property type="project" value="UniProtKB-UniPathway"/>
</dbReference>
<dbReference type="GO" id="GO:0048814">
    <property type="term" value="P:regulation of dendrite morphogenesis"/>
    <property type="evidence" value="ECO:0000318"/>
    <property type="project" value="GO_Central"/>
</dbReference>
<dbReference type="GO" id="GO:0030071">
    <property type="term" value="P:regulation of mitotic metaphase/anaphase transition"/>
    <property type="evidence" value="ECO:0000315"/>
    <property type="project" value="UniProtKB"/>
</dbReference>
<dbReference type="GO" id="GO:0006511">
    <property type="term" value="P:ubiquitin-dependent protein catabolic process"/>
    <property type="evidence" value="ECO:0000318"/>
    <property type="project" value="GO_Central"/>
</dbReference>
<dbReference type="CDD" id="cd08691">
    <property type="entry name" value="C2_NEDL1-like"/>
    <property type="match status" value="1"/>
</dbReference>
<dbReference type="CDD" id="cd00078">
    <property type="entry name" value="HECTc"/>
    <property type="match status" value="1"/>
</dbReference>
<dbReference type="CDD" id="cd00201">
    <property type="entry name" value="WW"/>
    <property type="match status" value="2"/>
</dbReference>
<dbReference type="FunFam" id="3.30.2410.10:FF:000002">
    <property type="entry name" value="E3 ubiquitin-protein ligase HECW2"/>
    <property type="match status" value="1"/>
</dbReference>
<dbReference type="FunFam" id="3.90.1750.10:FF:000036">
    <property type="entry name" value="E3 ubiquitin-protein ligase HECW2"/>
    <property type="match status" value="1"/>
</dbReference>
<dbReference type="FunFam" id="2.20.70.10:FF:000007">
    <property type="entry name" value="E3 ubiquitin-protein ligase HECW2 isoform X1"/>
    <property type="match status" value="1"/>
</dbReference>
<dbReference type="FunFam" id="2.60.40.2840:FF:000001">
    <property type="entry name" value="E3 ubiquitin-protein ligase HECW2 isoform X1"/>
    <property type="match status" value="1"/>
</dbReference>
<dbReference type="FunFam" id="3.30.2160.10:FF:000005">
    <property type="entry name" value="E3 ubiquitin-protein ligase HECW2 isoform X1"/>
    <property type="match status" value="1"/>
</dbReference>
<dbReference type="FunFam" id="3.90.1750.10:FF:000004">
    <property type="entry name" value="E3 ubiquitin-protein ligase HECW2 isoform X1"/>
    <property type="match status" value="1"/>
</dbReference>
<dbReference type="FunFam" id="2.20.70.10:FF:000048">
    <property type="entry name" value="HECT, C2 and WW domain-containing E3 ubiquitin protein ligase 1"/>
    <property type="match status" value="1"/>
</dbReference>
<dbReference type="FunFam" id="2.60.40.150:FF:000035">
    <property type="entry name" value="LOW QUALITY PROTEIN: E3 ubiquitin-protein ligase HECW2"/>
    <property type="match status" value="1"/>
</dbReference>
<dbReference type="Gene3D" id="2.20.70.10">
    <property type="match status" value="2"/>
</dbReference>
<dbReference type="Gene3D" id="2.60.40.2840">
    <property type="match status" value="1"/>
</dbReference>
<dbReference type="Gene3D" id="2.60.40.150">
    <property type="entry name" value="C2 domain"/>
    <property type="match status" value="1"/>
</dbReference>
<dbReference type="Gene3D" id="3.30.2160.10">
    <property type="entry name" value="Hect, E3 ligase catalytic domain"/>
    <property type="match status" value="1"/>
</dbReference>
<dbReference type="Gene3D" id="3.30.2410.10">
    <property type="entry name" value="Hect, E3 ligase catalytic domain"/>
    <property type="match status" value="1"/>
</dbReference>
<dbReference type="Gene3D" id="3.90.1750.10">
    <property type="entry name" value="Hect, E3 ligase catalytic domains"/>
    <property type="match status" value="1"/>
</dbReference>
<dbReference type="InterPro" id="IPR000008">
    <property type="entry name" value="C2_dom"/>
</dbReference>
<dbReference type="InterPro" id="IPR035892">
    <property type="entry name" value="C2_domain_sf"/>
</dbReference>
<dbReference type="InterPro" id="IPR037795">
    <property type="entry name" value="C2_HECW"/>
</dbReference>
<dbReference type="InterPro" id="IPR050409">
    <property type="entry name" value="E3_ubiq-protein_ligase"/>
</dbReference>
<dbReference type="InterPro" id="IPR000569">
    <property type="entry name" value="HECT_dom"/>
</dbReference>
<dbReference type="InterPro" id="IPR035983">
    <property type="entry name" value="Hect_E3_ubiquitin_ligase"/>
</dbReference>
<dbReference type="InterPro" id="IPR040524">
    <property type="entry name" value="HECW1_helix"/>
</dbReference>
<dbReference type="InterPro" id="IPR032348">
    <property type="entry name" value="HECW_N"/>
</dbReference>
<dbReference type="InterPro" id="IPR001202">
    <property type="entry name" value="WW_dom"/>
</dbReference>
<dbReference type="InterPro" id="IPR036020">
    <property type="entry name" value="WW_dom_sf"/>
</dbReference>
<dbReference type="PANTHER" id="PTHR11254:SF127">
    <property type="entry name" value="E3 UBIQUITIN-PROTEIN LIGASE HECW2"/>
    <property type="match status" value="1"/>
</dbReference>
<dbReference type="PANTHER" id="PTHR11254">
    <property type="entry name" value="HECT DOMAIN UBIQUITIN-PROTEIN LIGASE"/>
    <property type="match status" value="1"/>
</dbReference>
<dbReference type="Pfam" id="PF00168">
    <property type="entry name" value="C2"/>
    <property type="match status" value="1"/>
</dbReference>
<dbReference type="Pfam" id="PF00632">
    <property type="entry name" value="HECT"/>
    <property type="match status" value="1"/>
</dbReference>
<dbReference type="Pfam" id="PF18436">
    <property type="entry name" value="HECW1_helix"/>
    <property type="match status" value="1"/>
</dbReference>
<dbReference type="Pfam" id="PF16562">
    <property type="entry name" value="HECW_N"/>
    <property type="match status" value="1"/>
</dbReference>
<dbReference type="Pfam" id="PF00397">
    <property type="entry name" value="WW"/>
    <property type="match status" value="1"/>
</dbReference>
<dbReference type="SMART" id="SM00239">
    <property type="entry name" value="C2"/>
    <property type="match status" value="1"/>
</dbReference>
<dbReference type="SMART" id="SM00119">
    <property type="entry name" value="HECTc"/>
    <property type="match status" value="1"/>
</dbReference>
<dbReference type="SMART" id="SM00456">
    <property type="entry name" value="WW"/>
    <property type="match status" value="2"/>
</dbReference>
<dbReference type="SUPFAM" id="SSF49562">
    <property type="entry name" value="C2 domain (Calcium/lipid-binding domain, CaLB)"/>
    <property type="match status" value="1"/>
</dbReference>
<dbReference type="SUPFAM" id="SSF56204">
    <property type="entry name" value="Hect, E3 ligase catalytic domain"/>
    <property type="match status" value="1"/>
</dbReference>
<dbReference type="SUPFAM" id="SSF51045">
    <property type="entry name" value="WW domain"/>
    <property type="match status" value="2"/>
</dbReference>
<dbReference type="PROSITE" id="PS50004">
    <property type="entry name" value="C2"/>
    <property type="match status" value="1"/>
</dbReference>
<dbReference type="PROSITE" id="PS50237">
    <property type="entry name" value="HECT"/>
    <property type="match status" value="1"/>
</dbReference>
<dbReference type="PROSITE" id="PS01159">
    <property type="entry name" value="WW_DOMAIN_1"/>
    <property type="match status" value="2"/>
</dbReference>
<dbReference type="PROSITE" id="PS50020">
    <property type="entry name" value="WW_DOMAIN_2"/>
    <property type="match status" value="2"/>
</dbReference>
<accession>Q9P2P5</accession>
<accession>B8ZZB4</accession>
<accession>Q17RT5</accession>
<accession>Q68DF8</accession>
<accession>Q9NPS9</accession>
<keyword id="KW-0002">3D-structure</keyword>
<keyword id="KW-0025">Alternative splicing</keyword>
<keyword id="KW-0175">Coiled coil</keyword>
<keyword id="KW-0963">Cytoplasm</keyword>
<keyword id="KW-0206">Cytoskeleton</keyword>
<keyword id="KW-0225">Disease variant</keyword>
<keyword id="KW-0597">Phosphoprotein</keyword>
<keyword id="KW-1267">Proteomics identification</keyword>
<keyword id="KW-1185">Reference proteome</keyword>
<keyword id="KW-0677">Repeat</keyword>
<keyword id="KW-0808">Transferase</keyword>
<keyword id="KW-0832">Ubl conjugation</keyword>
<keyword id="KW-0833">Ubl conjugation pathway</keyword>
<reference key="1">
    <citation type="journal article" date="2000" name="DNA Res.">
        <title>Prediction of the coding sequences of unidentified human genes. XVI. The complete sequences of 150 new cDNA clones from brain which code for large proteins in vitro.</title>
        <authorList>
            <person name="Nagase T."/>
            <person name="Kikuno R."/>
            <person name="Ishikawa K."/>
            <person name="Hirosawa M."/>
            <person name="Ohara O."/>
        </authorList>
    </citation>
    <scope>NUCLEOTIDE SEQUENCE [LARGE SCALE MRNA] (ISOFORM 1)</scope>
    <source>
        <tissue>Brain</tissue>
    </source>
</reference>
<reference key="2">
    <citation type="journal article" date="2007" name="BMC Genomics">
        <title>The full-ORF clone resource of the German cDNA consortium.</title>
        <authorList>
            <person name="Bechtel S."/>
            <person name="Rosenfelder H."/>
            <person name="Duda A."/>
            <person name="Schmidt C.P."/>
            <person name="Ernst U."/>
            <person name="Wellenreuther R."/>
            <person name="Mehrle A."/>
            <person name="Schuster C."/>
            <person name="Bahr A."/>
            <person name="Bloecker H."/>
            <person name="Heubner D."/>
            <person name="Hoerlein A."/>
            <person name="Michel G."/>
            <person name="Wedler H."/>
            <person name="Koehrer K."/>
            <person name="Ottenwaelder B."/>
            <person name="Poustka A."/>
            <person name="Wiemann S."/>
            <person name="Schupp I."/>
        </authorList>
    </citation>
    <scope>NUCLEOTIDE SEQUENCE [LARGE SCALE MRNA] (ISOFORM 2)</scope>
    <scope>NUCLEOTIDE SEQUENCE [LARGE SCALE MRNA] OF 1352-1572 (ISOFORM 1)</scope>
    <source>
        <tissue>Uterus</tissue>
    </source>
</reference>
<reference key="3">
    <citation type="journal article" date="2005" name="Nature">
        <title>Generation and annotation of the DNA sequences of human chromosomes 2 and 4.</title>
        <authorList>
            <person name="Hillier L.W."/>
            <person name="Graves T.A."/>
            <person name="Fulton R.S."/>
            <person name="Fulton L.A."/>
            <person name="Pepin K.H."/>
            <person name="Minx P."/>
            <person name="Wagner-McPherson C."/>
            <person name="Layman D."/>
            <person name="Wylie K."/>
            <person name="Sekhon M."/>
            <person name="Becker M.C."/>
            <person name="Fewell G.A."/>
            <person name="Delehaunty K.D."/>
            <person name="Miner T.L."/>
            <person name="Nash W.E."/>
            <person name="Kremitzki C."/>
            <person name="Oddy L."/>
            <person name="Du H."/>
            <person name="Sun H."/>
            <person name="Bradshaw-Cordum H."/>
            <person name="Ali J."/>
            <person name="Carter J."/>
            <person name="Cordes M."/>
            <person name="Harris A."/>
            <person name="Isak A."/>
            <person name="van Brunt A."/>
            <person name="Nguyen C."/>
            <person name="Du F."/>
            <person name="Courtney L."/>
            <person name="Kalicki J."/>
            <person name="Ozersky P."/>
            <person name="Abbott S."/>
            <person name="Armstrong J."/>
            <person name="Belter E.A."/>
            <person name="Caruso L."/>
            <person name="Cedroni M."/>
            <person name="Cotton M."/>
            <person name="Davidson T."/>
            <person name="Desai A."/>
            <person name="Elliott G."/>
            <person name="Erb T."/>
            <person name="Fronick C."/>
            <person name="Gaige T."/>
            <person name="Haakenson W."/>
            <person name="Haglund K."/>
            <person name="Holmes A."/>
            <person name="Harkins R."/>
            <person name="Kim K."/>
            <person name="Kruchowski S.S."/>
            <person name="Strong C.M."/>
            <person name="Grewal N."/>
            <person name="Goyea E."/>
            <person name="Hou S."/>
            <person name="Levy A."/>
            <person name="Martinka S."/>
            <person name="Mead K."/>
            <person name="McLellan M.D."/>
            <person name="Meyer R."/>
            <person name="Randall-Maher J."/>
            <person name="Tomlinson C."/>
            <person name="Dauphin-Kohlberg S."/>
            <person name="Kozlowicz-Reilly A."/>
            <person name="Shah N."/>
            <person name="Swearengen-Shahid S."/>
            <person name="Snider J."/>
            <person name="Strong J.T."/>
            <person name="Thompson J."/>
            <person name="Yoakum M."/>
            <person name="Leonard S."/>
            <person name="Pearman C."/>
            <person name="Trani L."/>
            <person name="Radionenko M."/>
            <person name="Waligorski J.E."/>
            <person name="Wang C."/>
            <person name="Rock S.M."/>
            <person name="Tin-Wollam A.-M."/>
            <person name="Maupin R."/>
            <person name="Latreille P."/>
            <person name="Wendl M.C."/>
            <person name="Yang S.-P."/>
            <person name="Pohl C."/>
            <person name="Wallis J.W."/>
            <person name="Spieth J."/>
            <person name="Bieri T.A."/>
            <person name="Berkowicz N."/>
            <person name="Nelson J.O."/>
            <person name="Osborne J."/>
            <person name="Ding L."/>
            <person name="Meyer R."/>
            <person name="Sabo A."/>
            <person name="Shotland Y."/>
            <person name="Sinha P."/>
            <person name="Wohldmann P.E."/>
            <person name="Cook L.L."/>
            <person name="Hickenbotham M.T."/>
            <person name="Eldred J."/>
            <person name="Williams D."/>
            <person name="Jones T.A."/>
            <person name="She X."/>
            <person name="Ciccarelli F.D."/>
            <person name="Izaurralde E."/>
            <person name="Taylor J."/>
            <person name="Schmutz J."/>
            <person name="Myers R.M."/>
            <person name="Cox D.R."/>
            <person name="Huang X."/>
            <person name="McPherson J.D."/>
            <person name="Mardis E.R."/>
            <person name="Clifton S.W."/>
            <person name="Warren W.C."/>
            <person name="Chinwalla A.T."/>
            <person name="Eddy S.R."/>
            <person name="Marra M.A."/>
            <person name="Ovcharenko I."/>
            <person name="Furey T.S."/>
            <person name="Miller W."/>
            <person name="Eichler E.E."/>
            <person name="Bork P."/>
            <person name="Suyama M."/>
            <person name="Torrents D."/>
            <person name="Waterston R.H."/>
            <person name="Wilson R.K."/>
        </authorList>
    </citation>
    <scope>NUCLEOTIDE SEQUENCE [LARGE SCALE GENOMIC DNA]</scope>
</reference>
<reference key="4">
    <citation type="journal article" date="2004" name="Genome Res.">
        <title>The status, quality, and expansion of the NIH full-length cDNA project: the Mammalian Gene Collection (MGC).</title>
        <authorList>
            <consortium name="The MGC Project Team"/>
        </authorList>
    </citation>
    <scope>NUCLEOTIDE SEQUENCE [LARGE SCALE MRNA] (ISOFORM 1)</scope>
    <source>
        <tissue>Heart</tissue>
        <tissue>Lung</tissue>
    </source>
</reference>
<reference key="5">
    <citation type="journal article" date="2003" name="Biochem. Biophys. Res. Commun.">
        <title>A novel HECT-type E3 ubiquitin ligase, NEDL2, stabilizes p73 and enhances its transcriptional activity.</title>
        <authorList>
            <person name="Miyazaki K."/>
            <person name="Ozaki T."/>
            <person name="Kato C."/>
            <person name="Hanamoto T."/>
            <person name="Fujita T."/>
            <person name="Irino S."/>
            <person name="Watanabe K."/>
            <person name="Nakagawa T."/>
            <person name="Nakagawara A."/>
        </authorList>
    </citation>
    <scope>FUNCTION</scope>
    <scope>INTERACTION WITH TP73</scope>
    <scope>TISSUE SPECIFICITY</scope>
</reference>
<reference key="6">
    <citation type="journal article" date="2008" name="Proc. Natl. Acad. Sci. U.S.A.">
        <title>A quantitative atlas of mitotic phosphorylation.</title>
        <authorList>
            <person name="Dephoure N."/>
            <person name="Zhou C."/>
            <person name="Villen J."/>
            <person name="Beausoleil S.A."/>
            <person name="Bakalarski C.E."/>
            <person name="Elledge S.J."/>
            <person name="Gygi S.P."/>
        </authorList>
    </citation>
    <scope>IDENTIFICATION BY MASS SPECTROMETRY [LARGE SCALE ANALYSIS]</scope>
    <source>
        <tissue>Cervix carcinoma</tissue>
    </source>
</reference>
<reference key="7">
    <citation type="journal article" date="2009" name="Anal. Chem.">
        <title>Lys-N and trypsin cover complementary parts of the phosphoproteome in a refined SCX-based approach.</title>
        <authorList>
            <person name="Gauci S."/>
            <person name="Helbig A.O."/>
            <person name="Slijper M."/>
            <person name="Krijgsveld J."/>
            <person name="Heck A.J."/>
            <person name="Mohammed S."/>
        </authorList>
    </citation>
    <scope>IDENTIFICATION BY MASS SPECTROMETRY [LARGE SCALE ANALYSIS]</scope>
</reference>
<reference key="8">
    <citation type="journal article" date="2011" name="Sci. Signal.">
        <title>System-wide temporal characterization of the proteome and phosphoproteome of human embryonic stem cell differentiation.</title>
        <authorList>
            <person name="Rigbolt K.T."/>
            <person name="Prokhorova T.A."/>
            <person name="Akimov V."/>
            <person name="Henningsen J."/>
            <person name="Johansen P.T."/>
            <person name="Kratchmarova I."/>
            <person name="Kassem M."/>
            <person name="Mann M."/>
            <person name="Olsen J.V."/>
            <person name="Blagoev B."/>
        </authorList>
    </citation>
    <scope>IDENTIFICATION BY MASS SPECTROMETRY [LARGE SCALE ANALYSIS]</scope>
</reference>
<reference key="9">
    <citation type="journal article" date="2013" name="J. Biol. Chem.">
        <title>The HECT type ubiquitin ligase NEDL2 is degraded by anaphase-promoting complex/cyclosome (APC/C)-Cdh1, and its tight regulation maintains the metaphase to anaphase transition.</title>
        <authorList>
            <person name="Lu L."/>
            <person name="Hu S."/>
            <person name="Wei R."/>
            <person name="Qiu X."/>
            <person name="Lu K."/>
            <person name="Fu Y."/>
            <person name="Li H."/>
            <person name="Xing G."/>
            <person name="Li D."/>
            <person name="Peng R."/>
            <person name="He F."/>
            <person name="Zhang L."/>
        </authorList>
    </citation>
    <scope>FUNCTION</scope>
    <scope>SUBCELLULAR LOCATION</scope>
    <scope>INTERACTION WITH FZR1</scope>
    <scope>UBIQUITINATION</scope>
</reference>
<reference key="10">
    <citation type="journal article" date="2013" name="J. Proteome Res.">
        <title>Toward a comprehensive characterization of a human cancer cell phosphoproteome.</title>
        <authorList>
            <person name="Zhou H."/>
            <person name="Di Palma S."/>
            <person name="Preisinger C."/>
            <person name="Peng M."/>
            <person name="Polat A.N."/>
            <person name="Heck A.J."/>
            <person name="Mohammed S."/>
        </authorList>
    </citation>
    <scope>PHOSPHORYLATION [LARGE SCALE ANALYSIS] AT SER-48; SER-852 AND SER-909</scope>
    <scope>IDENTIFICATION BY MASS SPECTROMETRY [LARGE SCALE ANALYSIS]</scope>
    <source>
        <tissue>Cervix carcinoma</tissue>
        <tissue>Erythroleukemia</tissue>
    </source>
</reference>
<reference key="11">
    <citation type="journal article" date="2014" name="J. Proteomics">
        <title>An enzyme assisted RP-RPLC approach for in-depth analysis of human liver phosphoproteome.</title>
        <authorList>
            <person name="Bian Y."/>
            <person name="Song C."/>
            <person name="Cheng K."/>
            <person name="Dong M."/>
            <person name="Wang F."/>
            <person name="Huang J."/>
            <person name="Sun D."/>
            <person name="Wang L."/>
            <person name="Ye M."/>
            <person name="Zou H."/>
        </authorList>
    </citation>
    <scope>PHOSPHORYLATION [LARGE SCALE ANALYSIS] AT SER-1175</scope>
    <scope>IDENTIFICATION BY MASS SPECTROMETRY [LARGE SCALE ANALYSIS]</scope>
    <source>
        <tissue>Liver</tissue>
    </source>
</reference>
<reference key="12">
    <citation type="journal article" date="2017" name="J. Med. Genet.">
        <title>De novo missense variants in HECW2 are associated with neurodevelopmental delay and hypotonia.</title>
        <authorList>
            <person name="Berko E.R."/>
            <person name="Cho M.T."/>
            <person name="Eng C."/>
            <person name="Shao Y."/>
            <person name="Sweetser D.A."/>
            <person name="Waxler J."/>
            <person name="Robin N.H."/>
            <person name="Brewer F."/>
            <person name="Donkervoort S."/>
            <person name="Mohassel P."/>
            <person name="Boennemann C.G."/>
            <person name="Bialer M."/>
            <person name="Moore C."/>
            <person name="Wolfe L.A."/>
            <person name="Tifft C.J."/>
            <person name="Shen Y."/>
            <person name="Retterer K."/>
            <person name="Millan F."/>
            <person name="Chung W.K."/>
        </authorList>
    </citation>
    <scope>INVOLVEMENT IN NDHSAL</scope>
    <scope>VARIANTS NDHSAL GLN-1191; VAL-1193; TRP-1330 AND GLY-1445</scope>
</reference>
<comment type="function">
    <text evidence="7 8">E3 ubiquitin-protein ligase that mediates ubiquitination of TP73. Acts to stabilize TP73 and enhance activation of transcription by TP73 (PubMed:12890487). Involved in the regulation of mitotic metaphase/anaphase transition (PubMed:24163370).</text>
</comment>
<comment type="catalytic activity">
    <reaction>
        <text>S-ubiquitinyl-[E2 ubiquitin-conjugating enzyme]-L-cysteine + [acceptor protein]-L-lysine = [E2 ubiquitin-conjugating enzyme]-L-cysteine + N(6)-ubiquitinyl-[acceptor protein]-L-lysine.</text>
        <dbReference type="EC" id="2.3.2.26"/>
    </reaction>
</comment>
<comment type="pathway">
    <text>Protein modification; protein ubiquitination.</text>
</comment>
<comment type="subunit">
    <text evidence="7 8">Interacts with TP73 (PubMed:12890487). Interacts with FZR1 (PubMed:24163370).</text>
</comment>
<comment type="interaction">
    <interactant intactId="EBI-6946802">
        <id>Q9P2P5</id>
    </interactant>
    <interactant intactId="EBI-8636612">
        <id>Q15884</id>
        <label>ENTREP1</label>
    </interactant>
    <organismsDiffer>false</organismsDiffer>
    <experiments>4</experiments>
</comment>
<comment type="subcellular location">
    <subcellularLocation>
        <location evidence="1">Cytoplasm</location>
    </subcellularLocation>
    <subcellularLocation>
        <location evidence="8">Cytoplasm</location>
        <location evidence="8">Cytoskeleton</location>
        <location evidence="8">Spindle</location>
    </subcellularLocation>
</comment>
<comment type="alternative products">
    <event type="alternative splicing"/>
    <isoform>
        <id>Q9P2P5-1</id>
        <name>1</name>
        <sequence type="displayed"/>
    </isoform>
    <isoform>
        <id>Q9P2P5-2</id>
        <name>2</name>
        <sequence type="described" ref="VSP_059106 VSP_059107 VSP_059108"/>
    </isoform>
</comment>
<comment type="tissue specificity">
    <text evidence="7">Predominantly expressed in adult brain, lung and heart.</text>
</comment>
<comment type="PTM">
    <text evidence="8">Ubiquitinated and degraded during mitotic exit by APC/C-Cdh1.</text>
</comment>
<comment type="disease" evidence="9">
    <disease id="DI-04894">
        <name>Neurodevelopmental disorder with hypotonia, seizures, and absent language</name>
        <acronym>NDHSAL</acronym>
        <description>A neurodevelopmental disorder characterized by severely delayed psychomotor development, absent speech, epilepsy, encephalopathy, hypotonia, dystonia/dyskinesia, and macrocephaly. Brain imaging show cerebral atrophy, enlarged ventricles, and white matter abnormalities.</description>
        <dbReference type="MIM" id="617268"/>
    </disease>
    <text>The disease is caused by variants affecting the gene represented in this entry.</text>
</comment>
<comment type="miscellaneous">
    <molecule>Isoform 2</molecule>
    <text evidence="11">May be produced at very low levels due to a premature stop codon in the mRNA, leading to nonsense-mediated mRNA decay.</text>
</comment>
<comment type="sequence caution" evidence="11">
    <conflict type="erroneous initiation">
        <sequence resource="EMBL-CDS" id="BAA92539"/>
    </conflict>
    <text>Extended N-terminus.</text>
</comment>
<comment type="sequence caution" evidence="11">
    <conflict type="erroneous translation">
        <sequence resource="EMBL-CDS" id="CAH18262"/>
    </conflict>
    <text>Wrong choice of CDS.</text>
</comment>
<name>HECW2_HUMAN</name>
<organism>
    <name type="scientific">Homo sapiens</name>
    <name type="common">Human</name>
    <dbReference type="NCBI Taxonomy" id="9606"/>
    <lineage>
        <taxon>Eukaryota</taxon>
        <taxon>Metazoa</taxon>
        <taxon>Chordata</taxon>
        <taxon>Craniata</taxon>
        <taxon>Vertebrata</taxon>
        <taxon>Euteleostomi</taxon>
        <taxon>Mammalia</taxon>
        <taxon>Eutheria</taxon>
        <taxon>Euarchontoglires</taxon>
        <taxon>Primates</taxon>
        <taxon>Haplorrhini</taxon>
        <taxon>Catarrhini</taxon>
        <taxon>Hominidae</taxon>
        <taxon>Homo</taxon>
    </lineage>
</organism>
<evidence type="ECO:0000250" key="1"/>
<evidence type="ECO:0000255" key="2"/>
<evidence type="ECO:0000255" key="3">
    <source>
        <dbReference type="PROSITE-ProRule" id="PRU00041"/>
    </source>
</evidence>
<evidence type="ECO:0000255" key="4">
    <source>
        <dbReference type="PROSITE-ProRule" id="PRU00104"/>
    </source>
</evidence>
<evidence type="ECO:0000255" key="5">
    <source>
        <dbReference type="PROSITE-ProRule" id="PRU00224"/>
    </source>
</evidence>
<evidence type="ECO:0000256" key="6">
    <source>
        <dbReference type="SAM" id="MobiDB-lite"/>
    </source>
</evidence>
<evidence type="ECO:0000269" key="7">
    <source>
    </source>
</evidence>
<evidence type="ECO:0000269" key="8">
    <source>
    </source>
</evidence>
<evidence type="ECO:0000269" key="9">
    <source>
    </source>
</evidence>
<evidence type="ECO:0000303" key="10">
    <source>
    </source>
</evidence>
<evidence type="ECO:0000305" key="11"/>
<evidence type="ECO:0007744" key="12">
    <source>
    </source>
</evidence>
<evidence type="ECO:0007744" key="13">
    <source>
    </source>
</evidence>
<evidence type="ECO:0007829" key="14">
    <source>
        <dbReference type="PDB" id="2LFE"/>
    </source>
</evidence>
<feature type="chain" id="PRO_0000277667" description="E3 ubiquitin-protein ligase HECW2">
    <location>
        <begin position="1"/>
        <end position="1572"/>
    </location>
</feature>
<feature type="domain" description="C2" evidence="3">
    <location>
        <begin position="167"/>
        <end position="301"/>
    </location>
</feature>
<feature type="domain" description="WW 1" evidence="5">
    <location>
        <begin position="807"/>
        <end position="840"/>
    </location>
</feature>
<feature type="domain" description="WW 2" evidence="5">
    <location>
        <begin position="985"/>
        <end position="1018"/>
    </location>
</feature>
<feature type="domain" description="HECT" evidence="4">
    <location>
        <begin position="1237"/>
        <end position="1572"/>
    </location>
</feature>
<feature type="region of interest" description="Disordered" evidence="6">
    <location>
        <begin position="341"/>
        <end position="452"/>
    </location>
</feature>
<feature type="region of interest" description="Disordered" evidence="6">
    <location>
        <begin position="489"/>
        <end position="796"/>
    </location>
</feature>
<feature type="region of interest" description="Interaction with TP73" evidence="7">
    <location>
        <begin position="737"/>
        <end position="1068"/>
    </location>
</feature>
<feature type="region of interest" description="Disordered" evidence="6">
    <location>
        <begin position="1024"/>
        <end position="1069"/>
    </location>
</feature>
<feature type="region of interest" description="Disordered" evidence="6">
    <location>
        <begin position="1161"/>
        <end position="1187"/>
    </location>
</feature>
<feature type="coiled-coil region" evidence="2">
    <location>
        <begin position="847"/>
        <end position="874"/>
    </location>
</feature>
<feature type="compositionally biased region" description="Low complexity" evidence="6">
    <location>
        <begin position="400"/>
        <end position="410"/>
    </location>
</feature>
<feature type="compositionally biased region" description="Basic and acidic residues" evidence="6">
    <location>
        <begin position="518"/>
        <end position="532"/>
    </location>
</feature>
<feature type="compositionally biased region" description="Polar residues" evidence="6">
    <location>
        <begin position="572"/>
        <end position="588"/>
    </location>
</feature>
<feature type="compositionally biased region" description="Polar residues" evidence="6">
    <location>
        <begin position="597"/>
        <end position="614"/>
    </location>
</feature>
<feature type="compositionally biased region" description="Polar residues" evidence="6">
    <location>
        <begin position="643"/>
        <end position="664"/>
    </location>
</feature>
<feature type="compositionally biased region" description="Polar residues" evidence="6">
    <location>
        <begin position="688"/>
        <end position="703"/>
    </location>
</feature>
<feature type="compositionally biased region" description="Low complexity" evidence="6">
    <location>
        <begin position="744"/>
        <end position="776"/>
    </location>
</feature>
<feature type="compositionally biased region" description="Basic residues" evidence="6">
    <location>
        <begin position="1031"/>
        <end position="1040"/>
    </location>
</feature>
<feature type="compositionally biased region" description="Polar residues" evidence="6">
    <location>
        <begin position="1161"/>
        <end position="1181"/>
    </location>
</feature>
<feature type="active site" description="Glycyl thioester intermediate" evidence="4">
    <location>
        <position position="1540"/>
    </location>
</feature>
<feature type="modified residue" description="Phosphoserine" evidence="12">
    <location>
        <position position="48"/>
    </location>
</feature>
<feature type="modified residue" description="Phosphoserine" evidence="12">
    <location>
        <position position="852"/>
    </location>
</feature>
<feature type="modified residue" description="Phosphoserine" evidence="12">
    <location>
        <position position="909"/>
    </location>
</feature>
<feature type="modified residue" description="Phosphoserine" evidence="13">
    <location>
        <position position="1175"/>
    </location>
</feature>
<feature type="splice variant" id="VSP_059106" description="In isoform 2." evidence="10">
    <location>
        <begin position="1"/>
        <end position="131"/>
    </location>
</feature>
<feature type="splice variant" id="VSP_059107" description="In isoform 2." evidence="10">
    <original>DLRAVGLKKGMFFNPDPYLKMSI</original>
    <variation>ARKEEQFPHLCPPRAGETVYYHQ</variation>
    <location>
        <begin position="191"/>
        <end position="213"/>
    </location>
</feature>
<feature type="splice variant" id="VSP_059108" description="In isoform 2." evidence="10">
    <location>
        <begin position="214"/>
        <end position="1572"/>
    </location>
</feature>
<feature type="sequence variant" id="VAR_077905" description="In NDHSAL; dbSNP:rs878854416." evidence="9">
    <original>R</original>
    <variation>Q</variation>
    <location>
        <position position="1191"/>
    </location>
</feature>
<feature type="sequence variant" id="VAR_077906" description="In NDHSAL; dbSNP:rs878854422." evidence="9">
    <original>F</original>
    <variation>V</variation>
    <location>
        <position position="1193"/>
    </location>
</feature>
<feature type="sequence variant" id="VAR_077907" description="In NDHSAL; dbSNP:rs878854417." evidence="9">
    <original>R</original>
    <variation>W</variation>
    <location>
        <position position="1330"/>
    </location>
</feature>
<feature type="sequence variant" id="VAR_077908" description="In NDHSAL; dbSNP:rs878854424." evidence="9">
    <original>E</original>
    <variation>G</variation>
    <location>
        <position position="1445"/>
    </location>
</feature>
<feature type="sequence conflict" description="In Ref. 2; CAH18262." evidence="11" ref="2">
    <original>Q</original>
    <variation>H</variation>
    <location>
        <position position="1074"/>
    </location>
</feature>
<feature type="strand" evidence="14">
    <location>
        <begin position="60"/>
        <end position="64"/>
    </location>
</feature>
<feature type="strand" evidence="14">
    <location>
        <begin position="66"/>
        <end position="69"/>
    </location>
</feature>
<feature type="strand" evidence="14">
    <location>
        <begin position="76"/>
        <end position="81"/>
    </location>
</feature>
<feature type="strand" evidence="14">
    <location>
        <begin position="91"/>
        <end position="96"/>
    </location>
</feature>
<feature type="strand" evidence="14">
    <location>
        <begin position="117"/>
        <end position="123"/>
    </location>
</feature>
<feature type="strand" evidence="14">
    <location>
        <begin position="133"/>
        <end position="144"/>
    </location>
</feature>
<feature type="turn" evidence="14">
    <location>
        <begin position="145"/>
        <end position="148"/>
    </location>
</feature>
<feature type="strand" evidence="14">
    <location>
        <begin position="149"/>
        <end position="153"/>
    </location>
</feature>
<feature type="strand" evidence="14">
    <location>
        <begin position="157"/>
        <end position="160"/>
    </location>
</feature>